<keyword id="KW-0131">Cell cycle</keyword>
<keyword id="KW-0132">Cell division</keyword>
<keyword id="KW-0159">Chromosome partition</keyword>
<keyword id="KW-0963">Cytoplasm</keyword>
<keyword id="KW-1185">Reference proteome</keyword>
<organism>
    <name type="scientific">Enterococcus faecalis (strain ATCC 700802 / V583)</name>
    <dbReference type="NCBI Taxonomy" id="226185"/>
    <lineage>
        <taxon>Bacteria</taxon>
        <taxon>Bacillati</taxon>
        <taxon>Bacillota</taxon>
        <taxon>Bacilli</taxon>
        <taxon>Lactobacillales</taxon>
        <taxon>Enterococcaceae</taxon>
        <taxon>Enterococcus</taxon>
    </lineage>
</organism>
<proteinExistence type="inferred from homology"/>
<sequence length="201" mass="22701">MTLVSQIEAILFVVGEEGIGLEELAYLLEKSTAKTYEELTKLKEHYASDNKSALNILEVGNHFVLTTKKKYASLLKKYAQSPMSNALSQAALETLSIIAYKQPISRIEIDEIRGVQTSGSIQKLVARQLIEEKGRVDGPGRAILYGTTKYFMDYFGLKSLDELPDIQQMEDELEEELPMDLFFDRYQETNPMSETTEGEEA</sequence>
<evidence type="ECO:0000255" key="1">
    <source>
        <dbReference type="HAMAP-Rule" id="MF_01804"/>
    </source>
</evidence>
<accession>Q834U3</accession>
<feature type="chain" id="PRO_0000211131" description="Segregation and condensation protein B">
    <location>
        <begin position="1"/>
        <end position="201"/>
    </location>
</feature>
<reference key="1">
    <citation type="journal article" date="2003" name="Science">
        <title>Role of mobile DNA in the evolution of vancomycin-resistant Enterococcus faecalis.</title>
        <authorList>
            <person name="Paulsen I.T."/>
            <person name="Banerjei L."/>
            <person name="Myers G.S.A."/>
            <person name="Nelson K.E."/>
            <person name="Seshadri R."/>
            <person name="Read T.D."/>
            <person name="Fouts D.E."/>
            <person name="Eisen J.A."/>
            <person name="Gill S.R."/>
            <person name="Heidelberg J.F."/>
            <person name="Tettelin H."/>
            <person name="Dodson R.J."/>
            <person name="Umayam L.A."/>
            <person name="Brinkac L.M."/>
            <person name="Beanan M.J."/>
            <person name="Daugherty S.C."/>
            <person name="DeBoy R.T."/>
            <person name="Durkin S.A."/>
            <person name="Kolonay J.F."/>
            <person name="Madupu R."/>
            <person name="Nelson W.C."/>
            <person name="Vamathevan J.J."/>
            <person name="Tran B."/>
            <person name="Upton J."/>
            <person name="Hansen T."/>
            <person name="Shetty J."/>
            <person name="Khouri H.M."/>
            <person name="Utterback T.R."/>
            <person name="Radune D."/>
            <person name="Ketchum K.A."/>
            <person name="Dougherty B.A."/>
            <person name="Fraser C.M."/>
        </authorList>
    </citation>
    <scope>NUCLEOTIDE SEQUENCE [LARGE SCALE GENOMIC DNA]</scope>
    <source>
        <strain>ATCC 700802 / V583</strain>
    </source>
</reference>
<protein>
    <recommendedName>
        <fullName evidence="1">Segregation and condensation protein B</fullName>
    </recommendedName>
</protein>
<name>SCPB_ENTFA</name>
<comment type="function">
    <text evidence="1">Participates in chromosomal partition during cell division. May act via the formation of a condensin-like complex containing Smc and ScpA that pull DNA away from mid-cell into both cell halves.</text>
</comment>
<comment type="subunit">
    <text evidence="1">Homodimer. Homodimerization may be required to stabilize the binding of ScpA to the Smc head domains. Component of a cohesin-like complex composed of ScpA, ScpB and the Smc homodimer, in which ScpA and ScpB bind to the head domain of Smc. The presence of the three proteins is required for the association of the complex with DNA.</text>
</comment>
<comment type="subcellular location">
    <subcellularLocation>
        <location evidence="1">Cytoplasm</location>
    </subcellularLocation>
    <text evidence="1">Associated with two foci at the outer edges of the nucleoid region in young cells, and at four foci within both cell halves in older cells.</text>
</comment>
<comment type="similarity">
    <text evidence="1">Belongs to the ScpB family.</text>
</comment>
<dbReference type="EMBL" id="AE016830">
    <property type="protein sequence ID" value="AAO81327.1"/>
    <property type="molecule type" value="Genomic_DNA"/>
</dbReference>
<dbReference type="RefSeq" id="NP_815257.1">
    <property type="nucleotide sequence ID" value="NC_004668.1"/>
</dbReference>
<dbReference type="RefSeq" id="WP_002357625.1">
    <property type="nucleotide sequence ID" value="NZ_KE136528.1"/>
</dbReference>
<dbReference type="SMR" id="Q834U3"/>
<dbReference type="STRING" id="226185.EF_1539"/>
<dbReference type="EnsemblBacteria" id="AAO81327">
    <property type="protein sequence ID" value="AAO81327"/>
    <property type="gene ID" value="EF_1539"/>
</dbReference>
<dbReference type="GeneID" id="60893845"/>
<dbReference type="KEGG" id="efa:EF1539"/>
<dbReference type="PATRIC" id="fig|226185.45.peg.1965"/>
<dbReference type="eggNOG" id="COG1386">
    <property type="taxonomic scope" value="Bacteria"/>
</dbReference>
<dbReference type="HOGENOM" id="CLU_045647_5_3_9"/>
<dbReference type="Proteomes" id="UP000001415">
    <property type="component" value="Chromosome"/>
</dbReference>
<dbReference type="GO" id="GO:0005737">
    <property type="term" value="C:cytoplasm"/>
    <property type="evidence" value="ECO:0007669"/>
    <property type="project" value="UniProtKB-SubCell"/>
</dbReference>
<dbReference type="GO" id="GO:0051301">
    <property type="term" value="P:cell division"/>
    <property type="evidence" value="ECO:0007669"/>
    <property type="project" value="UniProtKB-KW"/>
</dbReference>
<dbReference type="GO" id="GO:0051304">
    <property type="term" value="P:chromosome separation"/>
    <property type="evidence" value="ECO:0007669"/>
    <property type="project" value="InterPro"/>
</dbReference>
<dbReference type="GO" id="GO:0006260">
    <property type="term" value="P:DNA replication"/>
    <property type="evidence" value="ECO:0007669"/>
    <property type="project" value="UniProtKB-UniRule"/>
</dbReference>
<dbReference type="Gene3D" id="1.10.10.10">
    <property type="entry name" value="Winged helix-like DNA-binding domain superfamily/Winged helix DNA-binding domain"/>
    <property type="match status" value="2"/>
</dbReference>
<dbReference type="HAMAP" id="MF_01804">
    <property type="entry name" value="ScpB"/>
    <property type="match status" value="1"/>
</dbReference>
<dbReference type="InterPro" id="IPR005234">
    <property type="entry name" value="ScpB_csome_segregation"/>
</dbReference>
<dbReference type="InterPro" id="IPR036388">
    <property type="entry name" value="WH-like_DNA-bd_sf"/>
</dbReference>
<dbReference type="InterPro" id="IPR036390">
    <property type="entry name" value="WH_DNA-bd_sf"/>
</dbReference>
<dbReference type="NCBIfam" id="TIGR00281">
    <property type="entry name" value="SMC-Scp complex subunit ScpB"/>
    <property type="match status" value="1"/>
</dbReference>
<dbReference type="PANTHER" id="PTHR34298">
    <property type="entry name" value="SEGREGATION AND CONDENSATION PROTEIN B"/>
    <property type="match status" value="1"/>
</dbReference>
<dbReference type="PANTHER" id="PTHR34298:SF2">
    <property type="entry name" value="SEGREGATION AND CONDENSATION PROTEIN B"/>
    <property type="match status" value="1"/>
</dbReference>
<dbReference type="Pfam" id="PF04079">
    <property type="entry name" value="SMC_ScpB"/>
    <property type="match status" value="1"/>
</dbReference>
<dbReference type="PIRSF" id="PIRSF019345">
    <property type="entry name" value="ScpB"/>
    <property type="match status" value="1"/>
</dbReference>
<dbReference type="SUPFAM" id="SSF46785">
    <property type="entry name" value="Winged helix' DNA-binding domain"/>
    <property type="match status" value="2"/>
</dbReference>
<gene>
    <name evidence="1" type="primary">scpB</name>
    <name type="ordered locus">EF_1539</name>
</gene>